<proteinExistence type="evidence at protein level"/>
<feature type="chain" id="PRO_0000424665" description="Metallocarboxypeptidase inhibitor b">
    <location>
        <begin position="1"/>
        <end position="53"/>
    </location>
</feature>
<feature type="chain" id="PRO_0000424666" description="Metallocarboxypeptidase inhibitor d" evidence="3">
    <location>
        <begin position="2"/>
        <end position="53"/>
    </location>
</feature>
<feature type="binding site" evidence="1">
    <location>
        <position position="53"/>
    </location>
    <ligand>
        <name>Zn(2+)</name>
        <dbReference type="ChEBI" id="CHEBI:29105"/>
        <note>ligand shared with metallocarboxypeptidase partner</note>
    </ligand>
</feature>
<feature type="disulfide bond" evidence="2">
    <location>
        <begin position="9"/>
        <end position="23"/>
    </location>
</feature>
<feature type="disulfide bond" evidence="2">
    <location>
        <begin position="15"/>
        <end position="51"/>
    </location>
</feature>
<feature type="disulfide bond" evidence="2">
    <location>
        <begin position="27"/>
        <end position="38"/>
    </location>
</feature>
<comment type="function">
    <text evidence="2 3">Metallocarboxypeptidase inhibitor. Has an inhibitory effect on bovine CPA1 and porcine CPB1. Does not inhibit D.melanogaster svr (carboxypeptidase D). Shows no activity against serine proteases subtilisin or bovine trypsin, cysteine protease papain, and aspartyl protease porcine pepsin.</text>
</comment>
<comment type="mass spectrometry" mass="5959.853" method="MALDI" evidence="3">
    <molecule>Metallocarboxypeptidase inhibitor b</molecule>
</comment>
<comment type="mass spectrometry" mass="5812.535" method="MALDI" evidence="3">
    <molecule>Metallocarboxypeptidase inhibitor d</molecule>
</comment>
<protein>
    <recommendedName>
        <fullName evidence="4">Metallocarboxypeptidase inhibitor b</fullName>
        <shortName evidence="4">MCPI</shortName>
    </recommendedName>
    <component>
        <recommendedName>
            <fullName evidence="4">Metallocarboxypeptidase inhibitor d</fullName>
        </recommendedName>
        <alternativeName>
            <fullName evidence="4">Carboxypeptidase inhibitor d</fullName>
            <shortName evidence="4">NvCId</shortName>
        </alternativeName>
    </component>
</protein>
<keyword id="KW-0903">Direct protein sequencing</keyword>
<keyword id="KW-1015">Disulfide bond</keyword>
<keyword id="KW-0479">Metal-binding</keyword>
<keyword id="KW-0481">Metalloenzyme inhibitor</keyword>
<keyword id="KW-0483">Metalloprotease inhibitor</keyword>
<keyword id="KW-0646">Protease inhibitor</keyword>
<keyword id="KW-0862">Zinc</keyword>
<reference evidence="5" key="1">
    <citation type="submission" date="2013-08" db="UniProtKB">
        <title>Kinetic and proteomic identification of protease inhibitors in marine invertebrates. Characterization of a carboxypeptidase inhibitor isolated from the mollusc Nerita versicolor.</title>
        <authorList>
            <person name="Covaleda Cortes G."/>
        </authorList>
    </citation>
    <scope>PROTEIN SEQUENCE</scope>
    <scope>FUNCTION</scope>
    <scope>MASS SPECTROMETRY</scope>
</reference>
<organism>
    <name type="scientific">Nerita versicolor</name>
    <name type="common">Four-tooth nerite</name>
    <name type="synonym">Sea snail</name>
    <dbReference type="NCBI Taxonomy" id="159942"/>
    <lineage>
        <taxon>Eukaryota</taxon>
        <taxon>Metazoa</taxon>
        <taxon>Spiralia</taxon>
        <taxon>Lophotrochozoa</taxon>
        <taxon>Mollusca</taxon>
        <taxon>Gastropoda</taxon>
        <taxon>Neritimorpha</taxon>
        <taxon>Cycloneritida</taxon>
        <taxon>Neritoidea</taxon>
        <taxon>Neritidae</taxon>
        <taxon>Nerita</taxon>
    </lineage>
</organism>
<dbReference type="SMR" id="C0HJE8"/>
<dbReference type="GO" id="GO:0046872">
    <property type="term" value="F:metal ion binding"/>
    <property type="evidence" value="ECO:0007669"/>
    <property type="project" value="UniProtKB-KW"/>
</dbReference>
<dbReference type="GO" id="GO:0008191">
    <property type="term" value="F:metalloendopeptidase inhibitor activity"/>
    <property type="evidence" value="ECO:0000314"/>
    <property type="project" value="UniProtKB"/>
</dbReference>
<dbReference type="GO" id="GO:0010951">
    <property type="term" value="P:negative regulation of endopeptidase activity"/>
    <property type="evidence" value="ECO:0000314"/>
    <property type="project" value="UniProtKB"/>
</dbReference>
<dbReference type="Gene3D" id="2.10.25.90">
    <property type="match status" value="1"/>
</dbReference>
<dbReference type="InterPro" id="IPR053736">
    <property type="entry name" value="MCP_Inhibitor_Domain_sf"/>
</dbReference>
<sequence length="53" mass="5965">FHVPDDRPCIKPGRCPLVPDATCTFVCKAADNDFGYECQHVWTFEGQRVGCYA</sequence>
<evidence type="ECO:0000250" key="1"/>
<evidence type="ECO:0000250" key="2">
    <source>
        <dbReference type="UniProtKB" id="P86912"/>
    </source>
</evidence>
<evidence type="ECO:0000269" key="3">
    <source ref="1"/>
</evidence>
<evidence type="ECO:0000303" key="4">
    <source ref="1"/>
</evidence>
<evidence type="ECO:0000305" key="5"/>
<name>MCPIB_NERVS</name>
<accession>C0HJE8</accession>